<dbReference type="EC" id="2.5.1.3" evidence="1"/>
<dbReference type="EMBL" id="CP000781">
    <property type="protein sequence ID" value="ABS67112.1"/>
    <property type="molecule type" value="Genomic_DNA"/>
</dbReference>
<dbReference type="SMR" id="A7IGG9"/>
<dbReference type="STRING" id="78245.Xaut_1867"/>
<dbReference type="KEGG" id="xau:Xaut_1867"/>
<dbReference type="eggNOG" id="COG0352">
    <property type="taxonomic scope" value="Bacteria"/>
</dbReference>
<dbReference type="HOGENOM" id="CLU_018272_3_2_5"/>
<dbReference type="OrthoDB" id="9810880at2"/>
<dbReference type="PhylomeDB" id="A7IGG9"/>
<dbReference type="UniPathway" id="UPA00060">
    <property type="reaction ID" value="UER00141"/>
</dbReference>
<dbReference type="Proteomes" id="UP000002417">
    <property type="component" value="Chromosome"/>
</dbReference>
<dbReference type="GO" id="GO:0005737">
    <property type="term" value="C:cytoplasm"/>
    <property type="evidence" value="ECO:0007669"/>
    <property type="project" value="TreeGrafter"/>
</dbReference>
<dbReference type="GO" id="GO:0000287">
    <property type="term" value="F:magnesium ion binding"/>
    <property type="evidence" value="ECO:0007669"/>
    <property type="project" value="UniProtKB-UniRule"/>
</dbReference>
<dbReference type="GO" id="GO:0004789">
    <property type="term" value="F:thiamine-phosphate diphosphorylase activity"/>
    <property type="evidence" value="ECO:0007669"/>
    <property type="project" value="UniProtKB-UniRule"/>
</dbReference>
<dbReference type="GO" id="GO:0009228">
    <property type="term" value="P:thiamine biosynthetic process"/>
    <property type="evidence" value="ECO:0007669"/>
    <property type="project" value="UniProtKB-KW"/>
</dbReference>
<dbReference type="GO" id="GO:0009229">
    <property type="term" value="P:thiamine diphosphate biosynthetic process"/>
    <property type="evidence" value="ECO:0007669"/>
    <property type="project" value="UniProtKB-UniRule"/>
</dbReference>
<dbReference type="CDD" id="cd00564">
    <property type="entry name" value="TMP_TenI"/>
    <property type="match status" value="1"/>
</dbReference>
<dbReference type="FunFam" id="3.20.20.70:FF:000096">
    <property type="entry name" value="Thiamine-phosphate synthase"/>
    <property type="match status" value="1"/>
</dbReference>
<dbReference type="Gene3D" id="3.20.20.70">
    <property type="entry name" value="Aldolase class I"/>
    <property type="match status" value="1"/>
</dbReference>
<dbReference type="HAMAP" id="MF_00097">
    <property type="entry name" value="TMP_synthase"/>
    <property type="match status" value="1"/>
</dbReference>
<dbReference type="InterPro" id="IPR013785">
    <property type="entry name" value="Aldolase_TIM"/>
</dbReference>
<dbReference type="InterPro" id="IPR036206">
    <property type="entry name" value="ThiamineP_synth_sf"/>
</dbReference>
<dbReference type="InterPro" id="IPR022998">
    <property type="entry name" value="ThiamineP_synth_TenI"/>
</dbReference>
<dbReference type="InterPro" id="IPR034291">
    <property type="entry name" value="TMP_synthase"/>
</dbReference>
<dbReference type="NCBIfam" id="TIGR00693">
    <property type="entry name" value="thiE"/>
    <property type="match status" value="1"/>
</dbReference>
<dbReference type="PANTHER" id="PTHR20857">
    <property type="entry name" value="THIAMINE-PHOSPHATE PYROPHOSPHORYLASE"/>
    <property type="match status" value="1"/>
</dbReference>
<dbReference type="PANTHER" id="PTHR20857:SF15">
    <property type="entry name" value="THIAMINE-PHOSPHATE SYNTHASE"/>
    <property type="match status" value="1"/>
</dbReference>
<dbReference type="Pfam" id="PF02581">
    <property type="entry name" value="TMP-TENI"/>
    <property type="match status" value="1"/>
</dbReference>
<dbReference type="SUPFAM" id="SSF51391">
    <property type="entry name" value="Thiamin phosphate synthase"/>
    <property type="match status" value="1"/>
</dbReference>
<feature type="chain" id="PRO_1000093692" description="Thiamine-phosphate synthase">
    <location>
        <begin position="1"/>
        <end position="211"/>
    </location>
</feature>
<feature type="binding site" evidence="1">
    <location>
        <begin position="39"/>
        <end position="41"/>
    </location>
    <ligand>
        <name>4-amino-2-methyl-5-(diphosphooxymethyl)pyrimidine</name>
        <dbReference type="ChEBI" id="CHEBI:57841"/>
    </ligand>
</feature>
<feature type="binding site" evidence="1">
    <location>
        <position position="71"/>
    </location>
    <ligand>
        <name>4-amino-2-methyl-5-(diphosphooxymethyl)pyrimidine</name>
        <dbReference type="ChEBI" id="CHEBI:57841"/>
    </ligand>
</feature>
<feature type="binding site" evidence="1">
    <location>
        <position position="72"/>
    </location>
    <ligand>
        <name>Mg(2+)</name>
        <dbReference type="ChEBI" id="CHEBI:18420"/>
    </ligand>
</feature>
<feature type="binding site" evidence="1">
    <location>
        <position position="91"/>
    </location>
    <ligand>
        <name>Mg(2+)</name>
        <dbReference type="ChEBI" id="CHEBI:18420"/>
    </ligand>
</feature>
<feature type="binding site" evidence="1">
    <location>
        <position position="110"/>
    </location>
    <ligand>
        <name>4-amino-2-methyl-5-(diphosphooxymethyl)pyrimidine</name>
        <dbReference type="ChEBI" id="CHEBI:57841"/>
    </ligand>
</feature>
<feature type="binding site" evidence="1">
    <location>
        <begin position="136"/>
        <end position="138"/>
    </location>
    <ligand>
        <name>2-[(2R,5Z)-2-carboxy-4-methylthiazol-5(2H)-ylidene]ethyl phosphate</name>
        <dbReference type="ChEBI" id="CHEBI:62899"/>
    </ligand>
</feature>
<feature type="binding site" evidence="1">
    <location>
        <position position="139"/>
    </location>
    <ligand>
        <name>4-amino-2-methyl-5-(diphosphooxymethyl)pyrimidine</name>
        <dbReference type="ChEBI" id="CHEBI:57841"/>
    </ligand>
</feature>
<feature type="binding site" evidence="1">
    <location>
        <position position="167"/>
    </location>
    <ligand>
        <name>2-[(2R,5Z)-2-carboxy-4-methylthiazol-5(2H)-ylidene]ethyl phosphate</name>
        <dbReference type="ChEBI" id="CHEBI:62899"/>
    </ligand>
</feature>
<feature type="binding site" evidence="1">
    <location>
        <begin position="187"/>
        <end position="188"/>
    </location>
    <ligand>
        <name>2-[(2R,5Z)-2-carboxy-4-methylthiazol-5(2H)-ylidene]ethyl phosphate</name>
        <dbReference type="ChEBI" id="CHEBI:62899"/>
    </ligand>
</feature>
<proteinExistence type="inferred from homology"/>
<reference key="1">
    <citation type="submission" date="2007-07" db="EMBL/GenBank/DDBJ databases">
        <title>Complete sequence of chromosome of Xanthobacter autotrophicus Py2.</title>
        <authorList>
            <consortium name="US DOE Joint Genome Institute"/>
            <person name="Copeland A."/>
            <person name="Lucas S."/>
            <person name="Lapidus A."/>
            <person name="Barry K."/>
            <person name="Glavina del Rio T."/>
            <person name="Hammon N."/>
            <person name="Israni S."/>
            <person name="Dalin E."/>
            <person name="Tice H."/>
            <person name="Pitluck S."/>
            <person name="Sims D."/>
            <person name="Brettin T."/>
            <person name="Bruce D."/>
            <person name="Detter J.C."/>
            <person name="Han C."/>
            <person name="Tapia R."/>
            <person name="Brainard J."/>
            <person name="Schmutz J."/>
            <person name="Larimer F."/>
            <person name="Land M."/>
            <person name="Hauser L."/>
            <person name="Kyrpides N."/>
            <person name="Kim E."/>
            <person name="Ensigns S.A."/>
            <person name="Richardson P."/>
        </authorList>
    </citation>
    <scope>NUCLEOTIDE SEQUENCE [LARGE SCALE GENOMIC DNA]</scope>
    <source>
        <strain>ATCC BAA-1158 / Py2</strain>
    </source>
</reference>
<keyword id="KW-0460">Magnesium</keyword>
<keyword id="KW-0479">Metal-binding</keyword>
<keyword id="KW-1185">Reference proteome</keyword>
<keyword id="KW-0784">Thiamine biosynthesis</keyword>
<keyword id="KW-0808">Transferase</keyword>
<protein>
    <recommendedName>
        <fullName evidence="1">Thiamine-phosphate synthase</fullName>
        <shortName evidence="1">TP synthase</shortName>
        <shortName evidence="1">TPS</shortName>
        <ecNumber evidence="1">2.5.1.3</ecNumber>
    </recommendedName>
    <alternativeName>
        <fullName evidence="1">Thiamine-phosphate pyrophosphorylase</fullName>
        <shortName evidence="1">TMP pyrophosphorylase</shortName>
        <shortName evidence="1">TMP-PPase</shortName>
    </alternativeName>
</protein>
<accession>A7IGG9</accession>
<organism>
    <name type="scientific">Xanthobacter autotrophicus (strain ATCC BAA-1158 / Py2)</name>
    <dbReference type="NCBI Taxonomy" id="78245"/>
    <lineage>
        <taxon>Bacteria</taxon>
        <taxon>Pseudomonadati</taxon>
        <taxon>Pseudomonadota</taxon>
        <taxon>Alphaproteobacteria</taxon>
        <taxon>Hyphomicrobiales</taxon>
        <taxon>Xanthobacteraceae</taxon>
        <taxon>Xanthobacter</taxon>
    </lineage>
</organism>
<comment type="function">
    <text evidence="1">Condenses 4-methyl-5-(beta-hydroxyethyl)thiazole monophosphate (THZ-P) and 2-methyl-4-amino-5-hydroxymethyl pyrimidine pyrophosphate (HMP-PP) to form thiamine monophosphate (TMP).</text>
</comment>
<comment type="catalytic activity">
    <reaction evidence="1">
        <text>2-[(2R,5Z)-2-carboxy-4-methylthiazol-5(2H)-ylidene]ethyl phosphate + 4-amino-2-methyl-5-(diphosphooxymethyl)pyrimidine + 2 H(+) = thiamine phosphate + CO2 + diphosphate</text>
        <dbReference type="Rhea" id="RHEA:47844"/>
        <dbReference type="ChEBI" id="CHEBI:15378"/>
        <dbReference type="ChEBI" id="CHEBI:16526"/>
        <dbReference type="ChEBI" id="CHEBI:33019"/>
        <dbReference type="ChEBI" id="CHEBI:37575"/>
        <dbReference type="ChEBI" id="CHEBI:57841"/>
        <dbReference type="ChEBI" id="CHEBI:62899"/>
        <dbReference type="EC" id="2.5.1.3"/>
    </reaction>
</comment>
<comment type="catalytic activity">
    <reaction evidence="1">
        <text>2-(2-carboxy-4-methylthiazol-5-yl)ethyl phosphate + 4-amino-2-methyl-5-(diphosphooxymethyl)pyrimidine + 2 H(+) = thiamine phosphate + CO2 + diphosphate</text>
        <dbReference type="Rhea" id="RHEA:47848"/>
        <dbReference type="ChEBI" id="CHEBI:15378"/>
        <dbReference type="ChEBI" id="CHEBI:16526"/>
        <dbReference type="ChEBI" id="CHEBI:33019"/>
        <dbReference type="ChEBI" id="CHEBI:37575"/>
        <dbReference type="ChEBI" id="CHEBI:57841"/>
        <dbReference type="ChEBI" id="CHEBI:62890"/>
        <dbReference type="EC" id="2.5.1.3"/>
    </reaction>
</comment>
<comment type="catalytic activity">
    <reaction evidence="1">
        <text>4-methyl-5-(2-phosphooxyethyl)-thiazole + 4-amino-2-methyl-5-(diphosphooxymethyl)pyrimidine + H(+) = thiamine phosphate + diphosphate</text>
        <dbReference type="Rhea" id="RHEA:22328"/>
        <dbReference type="ChEBI" id="CHEBI:15378"/>
        <dbReference type="ChEBI" id="CHEBI:33019"/>
        <dbReference type="ChEBI" id="CHEBI:37575"/>
        <dbReference type="ChEBI" id="CHEBI:57841"/>
        <dbReference type="ChEBI" id="CHEBI:58296"/>
        <dbReference type="EC" id="2.5.1.3"/>
    </reaction>
</comment>
<comment type="cofactor">
    <cofactor evidence="1">
        <name>Mg(2+)</name>
        <dbReference type="ChEBI" id="CHEBI:18420"/>
    </cofactor>
    <text evidence="1">Binds 1 Mg(2+) ion per subunit.</text>
</comment>
<comment type="pathway">
    <text evidence="1">Cofactor biosynthesis; thiamine diphosphate biosynthesis; thiamine phosphate from 4-amino-2-methyl-5-diphosphomethylpyrimidine and 4-methyl-5-(2-phosphoethyl)-thiazole: step 1/1.</text>
</comment>
<comment type="similarity">
    <text evidence="1">Belongs to the thiamine-phosphate synthase family.</text>
</comment>
<sequence>MPKPFDLTLYLVTDPRLVAARGLLTTVDAAVKGGATIVQLRDPDAHGRALVEQARALKALLAPLGIPLIINDRVDVAVAADADGVHLGQDDMTPADARAVLGPQRILGLSVGNPAEYAASDLSGVDYLGVGPVKATGTKADAGGAIGAAGVGAVRALTRLPLVGIGGLATADVADVIRAGADGVAVVSSICAASDPEQAARALKAAVLAAR</sequence>
<evidence type="ECO:0000255" key="1">
    <source>
        <dbReference type="HAMAP-Rule" id="MF_00097"/>
    </source>
</evidence>
<name>THIE_XANP2</name>
<gene>
    <name evidence="1" type="primary">thiE</name>
    <name type="ordered locus">Xaut_1867</name>
</gene>